<feature type="chain" id="PRO_1000055006" description="Small ribosomal subunit protein uS17">
    <location>
        <begin position="1"/>
        <end position="82"/>
    </location>
</feature>
<keyword id="KW-0687">Ribonucleoprotein</keyword>
<keyword id="KW-0689">Ribosomal protein</keyword>
<keyword id="KW-0694">RNA-binding</keyword>
<keyword id="KW-0699">rRNA-binding</keyword>
<accession>Q134T8</accession>
<reference key="1">
    <citation type="submission" date="2006-03" db="EMBL/GenBank/DDBJ databases">
        <title>Complete sequence of Rhodopseudomonas palustris BisB5.</title>
        <authorList>
            <consortium name="US DOE Joint Genome Institute"/>
            <person name="Copeland A."/>
            <person name="Lucas S."/>
            <person name="Lapidus A."/>
            <person name="Barry K."/>
            <person name="Detter J.C."/>
            <person name="Glavina del Rio T."/>
            <person name="Hammon N."/>
            <person name="Israni S."/>
            <person name="Dalin E."/>
            <person name="Tice H."/>
            <person name="Pitluck S."/>
            <person name="Chain P."/>
            <person name="Malfatti S."/>
            <person name="Shin M."/>
            <person name="Vergez L."/>
            <person name="Schmutz J."/>
            <person name="Larimer F."/>
            <person name="Land M."/>
            <person name="Hauser L."/>
            <person name="Pelletier D.A."/>
            <person name="Kyrpides N."/>
            <person name="Lykidis A."/>
            <person name="Oda Y."/>
            <person name="Harwood C.S."/>
            <person name="Richardson P."/>
        </authorList>
    </citation>
    <scope>NUCLEOTIDE SEQUENCE [LARGE SCALE GENOMIC DNA]</scope>
    <source>
        <strain>BisB5</strain>
    </source>
</reference>
<dbReference type="EMBL" id="CP000283">
    <property type="protein sequence ID" value="ABE40401.1"/>
    <property type="molecule type" value="Genomic_DNA"/>
</dbReference>
<dbReference type="SMR" id="Q134T8"/>
<dbReference type="STRING" id="316057.RPD_3175"/>
<dbReference type="KEGG" id="rpd:RPD_3175"/>
<dbReference type="eggNOG" id="COG0186">
    <property type="taxonomic scope" value="Bacteria"/>
</dbReference>
<dbReference type="HOGENOM" id="CLU_073626_1_1_5"/>
<dbReference type="BioCyc" id="RPAL316057:RPD_RS15940-MONOMER"/>
<dbReference type="Proteomes" id="UP000001818">
    <property type="component" value="Chromosome"/>
</dbReference>
<dbReference type="GO" id="GO:0022627">
    <property type="term" value="C:cytosolic small ribosomal subunit"/>
    <property type="evidence" value="ECO:0007669"/>
    <property type="project" value="TreeGrafter"/>
</dbReference>
<dbReference type="GO" id="GO:0019843">
    <property type="term" value="F:rRNA binding"/>
    <property type="evidence" value="ECO:0007669"/>
    <property type="project" value="UniProtKB-UniRule"/>
</dbReference>
<dbReference type="GO" id="GO:0003735">
    <property type="term" value="F:structural constituent of ribosome"/>
    <property type="evidence" value="ECO:0007669"/>
    <property type="project" value="InterPro"/>
</dbReference>
<dbReference type="GO" id="GO:0006412">
    <property type="term" value="P:translation"/>
    <property type="evidence" value="ECO:0007669"/>
    <property type="project" value="UniProtKB-UniRule"/>
</dbReference>
<dbReference type="CDD" id="cd00364">
    <property type="entry name" value="Ribosomal_uS17"/>
    <property type="match status" value="1"/>
</dbReference>
<dbReference type="FunFam" id="2.40.50.140:FF:000204">
    <property type="entry name" value="30S ribosomal protein S17"/>
    <property type="match status" value="1"/>
</dbReference>
<dbReference type="Gene3D" id="2.40.50.140">
    <property type="entry name" value="Nucleic acid-binding proteins"/>
    <property type="match status" value="1"/>
</dbReference>
<dbReference type="HAMAP" id="MF_01345_B">
    <property type="entry name" value="Ribosomal_uS17_B"/>
    <property type="match status" value="1"/>
</dbReference>
<dbReference type="InterPro" id="IPR012340">
    <property type="entry name" value="NA-bd_OB-fold"/>
</dbReference>
<dbReference type="InterPro" id="IPR000266">
    <property type="entry name" value="Ribosomal_uS17"/>
</dbReference>
<dbReference type="InterPro" id="IPR019984">
    <property type="entry name" value="Ribosomal_uS17_bact/chlr"/>
</dbReference>
<dbReference type="InterPro" id="IPR019979">
    <property type="entry name" value="Ribosomal_uS17_CS"/>
</dbReference>
<dbReference type="NCBIfam" id="NF004123">
    <property type="entry name" value="PRK05610.1"/>
    <property type="match status" value="1"/>
</dbReference>
<dbReference type="NCBIfam" id="TIGR03635">
    <property type="entry name" value="uS17_bact"/>
    <property type="match status" value="1"/>
</dbReference>
<dbReference type="PANTHER" id="PTHR10744">
    <property type="entry name" value="40S RIBOSOMAL PROTEIN S11 FAMILY MEMBER"/>
    <property type="match status" value="1"/>
</dbReference>
<dbReference type="PANTHER" id="PTHR10744:SF1">
    <property type="entry name" value="SMALL RIBOSOMAL SUBUNIT PROTEIN US17M"/>
    <property type="match status" value="1"/>
</dbReference>
<dbReference type="Pfam" id="PF00366">
    <property type="entry name" value="Ribosomal_S17"/>
    <property type="match status" value="1"/>
</dbReference>
<dbReference type="PRINTS" id="PR00973">
    <property type="entry name" value="RIBOSOMALS17"/>
</dbReference>
<dbReference type="SUPFAM" id="SSF50249">
    <property type="entry name" value="Nucleic acid-binding proteins"/>
    <property type="match status" value="1"/>
</dbReference>
<dbReference type="PROSITE" id="PS00056">
    <property type="entry name" value="RIBOSOMAL_S17"/>
    <property type="match status" value="1"/>
</dbReference>
<evidence type="ECO:0000255" key="1">
    <source>
        <dbReference type="HAMAP-Rule" id="MF_01345"/>
    </source>
</evidence>
<evidence type="ECO:0000305" key="2"/>
<protein>
    <recommendedName>
        <fullName evidence="1">Small ribosomal subunit protein uS17</fullName>
    </recommendedName>
    <alternativeName>
        <fullName evidence="2">30S ribosomal protein S17</fullName>
    </alternativeName>
</protein>
<organism>
    <name type="scientific">Rhodopseudomonas palustris (strain BisB5)</name>
    <dbReference type="NCBI Taxonomy" id="316057"/>
    <lineage>
        <taxon>Bacteria</taxon>
        <taxon>Pseudomonadati</taxon>
        <taxon>Pseudomonadota</taxon>
        <taxon>Alphaproteobacteria</taxon>
        <taxon>Hyphomicrobiales</taxon>
        <taxon>Nitrobacteraceae</taxon>
        <taxon>Rhodopseudomonas</taxon>
    </lineage>
</organism>
<comment type="function">
    <text evidence="1">One of the primary rRNA binding proteins, it binds specifically to the 5'-end of 16S ribosomal RNA.</text>
</comment>
<comment type="subunit">
    <text evidence="1">Part of the 30S ribosomal subunit.</text>
</comment>
<comment type="similarity">
    <text evidence="1">Belongs to the universal ribosomal protein uS17 family.</text>
</comment>
<name>RS17_RHOPS</name>
<sequence>MPKRTLQGVVVSDKQAKTVVVRVDRRFTHPIYKKTIRRSKNYHAHDENDQFHPGDMVWIEESKPISKLKRWTVVRGEPKKTA</sequence>
<proteinExistence type="inferred from homology"/>
<gene>
    <name evidence="1" type="primary">rpsQ</name>
    <name type="ordered locus">RPD_3175</name>
</gene>